<protein>
    <recommendedName>
        <fullName evidence="1">Eukaryotic translation initiation factor 3 subunit G</fullName>
        <shortName evidence="1">eIF3g</shortName>
    </recommendedName>
    <alternativeName>
        <fullName evidence="1">Eukaryotic translation initiation factor 3 RNA-binding subunit</fullName>
        <shortName evidence="1">eIF-3 RNA-binding subunit</shortName>
    </alternativeName>
    <alternativeName>
        <fullName evidence="1">Translation initiation factor eIF3 p33 subunit homolog</fullName>
        <shortName evidence="1">eIF3 p33 homolog</shortName>
    </alternativeName>
</protein>
<keyword id="KW-0963">Cytoplasm</keyword>
<keyword id="KW-0396">Initiation factor</keyword>
<keyword id="KW-0648">Protein biosynthesis</keyword>
<keyword id="KW-1185">Reference proteome</keyword>
<keyword id="KW-0694">RNA-binding</keyword>
<feature type="chain" id="PRO_0000365432" description="Eukaryotic translation initiation factor 3 subunit G">
    <location>
        <begin position="1"/>
        <end position="290"/>
    </location>
</feature>
<feature type="domain" description="RRM" evidence="1">
    <location>
        <begin position="210"/>
        <end position="288"/>
    </location>
</feature>
<feature type="region of interest" description="Disordered" evidence="2">
    <location>
        <begin position="1"/>
        <end position="35"/>
    </location>
</feature>
<feature type="region of interest" description="Disordered" evidence="2">
    <location>
        <begin position="157"/>
        <end position="200"/>
    </location>
</feature>
<dbReference type="EMBL" id="DS027045">
    <property type="protein sequence ID" value="EAW13867.1"/>
    <property type="molecule type" value="Genomic_DNA"/>
</dbReference>
<dbReference type="RefSeq" id="XP_001275293.1">
    <property type="nucleotide sequence ID" value="XM_001275292.1"/>
</dbReference>
<dbReference type="SMR" id="A1C646"/>
<dbReference type="STRING" id="344612.A1C646"/>
<dbReference type="EnsemblFungi" id="EAW13867">
    <property type="protein sequence ID" value="EAW13867"/>
    <property type="gene ID" value="ACLA_068950"/>
</dbReference>
<dbReference type="GeneID" id="4707902"/>
<dbReference type="KEGG" id="act:ACLA_068950"/>
<dbReference type="VEuPathDB" id="FungiDB:ACLA_068950"/>
<dbReference type="eggNOG" id="KOG0122">
    <property type="taxonomic scope" value="Eukaryota"/>
</dbReference>
<dbReference type="HOGENOM" id="CLU_034595_0_0_1"/>
<dbReference type="OMA" id="ICQGDHF"/>
<dbReference type="OrthoDB" id="639027at2759"/>
<dbReference type="Proteomes" id="UP000006701">
    <property type="component" value="Unassembled WGS sequence"/>
</dbReference>
<dbReference type="GO" id="GO:0016282">
    <property type="term" value="C:eukaryotic 43S preinitiation complex"/>
    <property type="evidence" value="ECO:0007669"/>
    <property type="project" value="UniProtKB-UniRule"/>
</dbReference>
<dbReference type="GO" id="GO:0033290">
    <property type="term" value="C:eukaryotic 48S preinitiation complex"/>
    <property type="evidence" value="ECO:0007669"/>
    <property type="project" value="UniProtKB-UniRule"/>
</dbReference>
<dbReference type="GO" id="GO:0071540">
    <property type="term" value="C:eukaryotic translation initiation factor 3 complex, eIF3e"/>
    <property type="evidence" value="ECO:0007669"/>
    <property type="project" value="EnsemblFungi"/>
</dbReference>
<dbReference type="GO" id="GO:0071541">
    <property type="term" value="C:eukaryotic translation initiation factor 3 complex, eIF3m"/>
    <property type="evidence" value="ECO:0007669"/>
    <property type="project" value="EnsemblFungi"/>
</dbReference>
<dbReference type="GO" id="GO:0043614">
    <property type="term" value="C:multi-eIF complex"/>
    <property type="evidence" value="ECO:0007669"/>
    <property type="project" value="EnsemblFungi"/>
</dbReference>
<dbReference type="GO" id="GO:0003723">
    <property type="term" value="F:RNA binding"/>
    <property type="evidence" value="ECO:0007669"/>
    <property type="project" value="UniProtKB-UniRule"/>
</dbReference>
<dbReference type="GO" id="GO:0003743">
    <property type="term" value="F:translation initiation factor activity"/>
    <property type="evidence" value="ECO:0007669"/>
    <property type="project" value="UniProtKB-UniRule"/>
</dbReference>
<dbReference type="GO" id="GO:0001732">
    <property type="term" value="P:formation of cytoplasmic translation initiation complex"/>
    <property type="evidence" value="ECO:0007669"/>
    <property type="project" value="UniProtKB-UniRule"/>
</dbReference>
<dbReference type="GO" id="GO:0002188">
    <property type="term" value="P:translation reinitiation"/>
    <property type="evidence" value="ECO:0007669"/>
    <property type="project" value="EnsemblFungi"/>
</dbReference>
<dbReference type="GO" id="GO:0006415">
    <property type="term" value="P:translational termination"/>
    <property type="evidence" value="ECO:0007669"/>
    <property type="project" value="EnsemblFungi"/>
</dbReference>
<dbReference type="CDD" id="cd12933">
    <property type="entry name" value="eIF3G"/>
    <property type="match status" value="1"/>
</dbReference>
<dbReference type="CDD" id="cd12408">
    <property type="entry name" value="RRM_eIF3G_like"/>
    <property type="match status" value="1"/>
</dbReference>
<dbReference type="FunFam" id="3.30.70.330:FF:000328">
    <property type="entry name" value="Eukaryotic translation initiation factor 3 subunit G"/>
    <property type="match status" value="1"/>
</dbReference>
<dbReference type="Gene3D" id="3.30.70.330">
    <property type="match status" value="1"/>
</dbReference>
<dbReference type="HAMAP" id="MF_03006">
    <property type="entry name" value="eIF3g"/>
    <property type="match status" value="1"/>
</dbReference>
<dbReference type="InterPro" id="IPR017334">
    <property type="entry name" value="eIF3_g"/>
</dbReference>
<dbReference type="InterPro" id="IPR024675">
    <property type="entry name" value="eIF3g_N"/>
</dbReference>
<dbReference type="InterPro" id="IPR034240">
    <property type="entry name" value="eIF3G_RRM"/>
</dbReference>
<dbReference type="InterPro" id="IPR012677">
    <property type="entry name" value="Nucleotide-bd_a/b_plait_sf"/>
</dbReference>
<dbReference type="InterPro" id="IPR035979">
    <property type="entry name" value="RBD_domain_sf"/>
</dbReference>
<dbReference type="InterPro" id="IPR000504">
    <property type="entry name" value="RRM_dom"/>
</dbReference>
<dbReference type="PANTHER" id="PTHR10352">
    <property type="entry name" value="EUKARYOTIC TRANSLATION INITIATION FACTOR 3 SUBUNIT G"/>
    <property type="match status" value="1"/>
</dbReference>
<dbReference type="Pfam" id="PF12353">
    <property type="entry name" value="eIF3g"/>
    <property type="match status" value="1"/>
</dbReference>
<dbReference type="Pfam" id="PF00076">
    <property type="entry name" value="RRM_1"/>
    <property type="match status" value="1"/>
</dbReference>
<dbReference type="PIRSF" id="PIRSF037949">
    <property type="entry name" value="Transl_init_eIF-3_RNA-bind"/>
    <property type="match status" value="1"/>
</dbReference>
<dbReference type="SMART" id="SM00360">
    <property type="entry name" value="RRM"/>
    <property type="match status" value="1"/>
</dbReference>
<dbReference type="SUPFAM" id="SSF54928">
    <property type="entry name" value="RNA-binding domain, RBD"/>
    <property type="match status" value="1"/>
</dbReference>
<dbReference type="PROSITE" id="PS50102">
    <property type="entry name" value="RRM"/>
    <property type="match status" value="1"/>
</dbReference>
<name>EIF3G_ASPCL</name>
<evidence type="ECO:0000255" key="1">
    <source>
        <dbReference type="HAMAP-Rule" id="MF_03006"/>
    </source>
</evidence>
<evidence type="ECO:0000256" key="2">
    <source>
        <dbReference type="SAM" id="MobiDB-lite"/>
    </source>
</evidence>
<accession>A1C646</accession>
<organism>
    <name type="scientific">Aspergillus clavatus (strain ATCC 1007 / CBS 513.65 / DSM 816 / NCTC 3887 / NRRL 1 / QM 1276 / 107)</name>
    <dbReference type="NCBI Taxonomy" id="344612"/>
    <lineage>
        <taxon>Eukaryota</taxon>
        <taxon>Fungi</taxon>
        <taxon>Dikarya</taxon>
        <taxon>Ascomycota</taxon>
        <taxon>Pezizomycotina</taxon>
        <taxon>Eurotiomycetes</taxon>
        <taxon>Eurotiomycetidae</taxon>
        <taxon>Eurotiales</taxon>
        <taxon>Aspergillaceae</taxon>
        <taxon>Aspergillus</taxon>
        <taxon>Aspergillus subgen. Fumigati</taxon>
    </lineage>
</organism>
<comment type="function">
    <text evidence="1">RNA-binding component of the eukaryotic translation initiation factor 3 (eIF-3) complex, which is involved in protein synthesis of a specialized repertoire of mRNAs and, together with other initiation factors, stimulates binding of mRNA and methionyl-tRNAi to the 40S ribosome. The eIF-3 complex specifically targets and initiates translation of a subset of mRNAs involved in cell proliferation. This subunit can bind 18S rRNA.</text>
</comment>
<comment type="subunit">
    <text evidence="1">Component of the eukaryotic translation initiation factor 3 (eIF-3) complex.</text>
</comment>
<comment type="subcellular location">
    <subcellularLocation>
        <location evidence="1">Cytoplasm</location>
    </subcellularLocation>
</comment>
<comment type="similarity">
    <text evidence="1">Belongs to the eIF-3 subunit G family.</text>
</comment>
<sequence>MSRLGNRADWADDEEFDDPSALPPQQVTTNKDGTKTVVSYRFNDEGKKVKVTRRIKTTVVREHVNPQVAERRSWAKFGLEKGHAAGPSFDTTSVGENIVFRPSVNWRAQAAEAEKAGGEKGSIKDQLKDKKVKCRICSGEHFTARCPFKDTMAPVDESTGAAGGEPGAEDEAAAGGLGAGTSSYVPPHMRKGAASGGERMAGKYEKDDLATLRVTNVSELAEESEIRDLFERFGRVTRVFLARDRETQRAKGFAFISFADRSDAARACEKMDGFGYRHLILRVEFAKRAT</sequence>
<proteinExistence type="inferred from homology"/>
<gene>
    <name type="primary">tif35</name>
    <name type="ORF">ACLA_068950</name>
</gene>
<reference key="1">
    <citation type="journal article" date="2008" name="PLoS Genet.">
        <title>Genomic islands in the pathogenic filamentous fungus Aspergillus fumigatus.</title>
        <authorList>
            <person name="Fedorova N.D."/>
            <person name="Khaldi N."/>
            <person name="Joardar V.S."/>
            <person name="Maiti R."/>
            <person name="Amedeo P."/>
            <person name="Anderson M.J."/>
            <person name="Crabtree J."/>
            <person name="Silva J.C."/>
            <person name="Badger J.H."/>
            <person name="Albarraq A."/>
            <person name="Angiuoli S."/>
            <person name="Bussey H."/>
            <person name="Bowyer P."/>
            <person name="Cotty P.J."/>
            <person name="Dyer P.S."/>
            <person name="Egan A."/>
            <person name="Galens K."/>
            <person name="Fraser-Liggett C.M."/>
            <person name="Haas B.J."/>
            <person name="Inman J.M."/>
            <person name="Kent R."/>
            <person name="Lemieux S."/>
            <person name="Malavazi I."/>
            <person name="Orvis J."/>
            <person name="Roemer T."/>
            <person name="Ronning C.M."/>
            <person name="Sundaram J.P."/>
            <person name="Sutton G."/>
            <person name="Turner G."/>
            <person name="Venter J.C."/>
            <person name="White O.R."/>
            <person name="Whitty B.R."/>
            <person name="Youngman P."/>
            <person name="Wolfe K.H."/>
            <person name="Goldman G.H."/>
            <person name="Wortman J.R."/>
            <person name="Jiang B."/>
            <person name="Denning D.W."/>
            <person name="Nierman W.C."/>
        </authorList>
    </citation>
    <scope>NUCLEOTIDE SEQUENCE [LARGE SCALE GENOMIC DNA]</scope>
    <source>
        <strain>ATCC 1007 / CBS 513.65 / DSM 816 / NCTC 3887 / NRRL 1 / QM 1276 / 107</strain>
    </source>
</reference>